<name>LIS1_DROME</name>
<keyword id="KW-0131">Cell cycle</keyword>
<keyword id="KW-0132">Cell division</keyword>
<keyword id="KW-0137">Centromere</keyword>
<keyword id="KW-0158">Chromosome</keyword>
<keyword id="KW-0175">Coiled coil</keyword>
<keyword id="KW-0963">Cytoplasm</keyword>
<keyword id="KW-0206">Cytoskeleton</keyword>
<keyword id="KW-0217">Developmental protein</keyword>
<keyword id="KW-0221">Differentiation</keyword>
<keyword id="KW-0995">Kinetochore</keyword>
<keyword id="KW-0493">Microtubule</keyword>
<keyword id="KW-0498">Mitosis</keyword>
<keyword id="KW-0524">Neurogenesis</keyword>
<keyword id="KW-0896">Oogenesis</keyword>
<keyword id="KW-1185">Reference proteome</keyword>
<keyword id="KW-0677">Repeat</keyword>
<keyword id="KW-0813">Transport</keyword>
<keyword id="KW-0853">WD repeat</keyword>
<organism>
    <name type="scientific">Drosophila melanogaster</name>
    <name type="common">Fruit fly</name>
    <dbReference type="NCBI Taxonomy" id="7227"/>
    <lineage>
        <taxon>Eukaryota</taxon>
        <taxon>Metazoa</taxon>
        <taxon>Ecdysozoa</taxon>
        <taxon>Arthropoda</taxon>
        <taxon>Hexapoda</taxon>
        <taxon>Insecta</taxon>
        <taxon>Pterygota</taxon>
        <taxon>Neoptera</taxon>
        <taxon>Endopterygota</taxon>
        <taxon>Diptera</taxon>
        <taxon>Brachycera</taxon>
        <taxon>Muscomorpha</taxon>
        <taxon>Ephydroidea</taxon>
        <taxon>Drosophilidae</taxon>
        <taxon>Drosophila</taxon>
        <taxon>Sophophora</taxon>
    </lineage>
</organism>
<proteinExistence type="evidence at protein level"/>
<evidence type="ECO:0000255" key="1">
    <source>
        <dbReference type="HAMAP-Rule" id="MF_03141"/>
    </source>
</evidence>
<evidence type="ECO:0000269" key="2">
    <source>
    </source>
</evidence>
<evidence type="ECO:0000269" key="3">
    <source>
    </source>
</evidence>
<evidence type="ECO:0000269" key="4">
    <source>
    </source>
</evidence>
<evidence type="ECO:0000269" key="5">
    <source>
    </source>
</evidence>
<evidence type="ECO:0000269" key="6">
    <source>
    </source>
</evidence>
<evidence type="ECO:0000269" key="7">
    <source>
    </source>
</evidence>
<evidence type="ECO:0000305" key="8"/>
<protein>
    <recommendedName>
        <fullName evidence="1">Lissencephaly-1 homolog</fullName>
        <shortName>DLis-1</shortName>
        <shortName>Dlis1</shortName>
        <shortName>Lissencephaly1</shortName>
    </recommendedName>
</protein>
<accession>Q7KNS3</accession>
<accession>A4UZJ3</accession>
<accession>O96698</accession>
<accession>Q5BI20</accession>
<accession>Q8SXJ6</accession>
<sequence length="411" mass="46460">MKMVLSQRQREELNQAIADYLGSNGYADSLETFRKEADLSTEVEKKFGGLLEKKWTSVIRLQKKVMELEAKLTEAEKEVIEGAPTKNKRTPGEWIPRPPEKFSLTGHRASITRVIFHPIFALMVSASEDATIRIWDFETGEYERSLKGHTDSVQDVAFDAQGKLLASCSADLSIKLWDFQQSYECIKTMHGHDHNVSSVAFVPAGDYVLSASRDRTIKMWEVATGYCVKTYTGHREWVRMVRVHIEGSIFATCSNDQTIRVWLTNSKDCKVELRDHEHTVECIAWAPEAAASAINEAAGADNKKGHHQGPFLASGSRDKTIRIWDVSVGLCLLTLSGHDNWVRGLAFHPGGKYLVSASDDKTIRVWDLRNKRCMKTLYAHQHFCTSIDFHKAHPYVISGSVDQTVKVWECR</sequence>
<reference key="1">
    <citation type="journal article" date="1999" name="Development">
        <title>Lis1, the Drosophila homolog of a human lissencephaly disease gene, is required for germline cell division and oocyte differentiation.</title>
        <authorList>
            <person name="Liu Z."/>
            <person name="Xie T."/>
            <person name="Steward R."/>
        </authorList>
    </citation>
    <scope>NUCLEOTIDE SEQUENCE [MRNA]</scope>
    <scope>FUNCTION</scope>
    <scope>TISSUE SPECIFICITY</scope>
    <scope>MUTAGENESIS OF GLU-128</scope>
    <source>
        <strain>Oregon-R</strain>
        <tissue>Embryo</tissue>
    </source>
</reference>
<reference key="2">
    <citation type="journal article" date="1999" name="Nat. Cell Biol.">
        <title>Drosophila Lissencephaly-1 functions with Bic-D and dynein in oocyte determination and nuclear positioning.</title>
        <authorList>
            <person name="Swan A."/>
            <person name="Nguyen T."/>
            <person name="Suter B."/>
        </authorList>
    </citation>
    <scope>NUCLEOTIDE SEQUENCE [MRNA]</scope>
    <scope>FUNCTION</scope>
    <scope>SUBCELLULAR LOCATION</scope>
</reference>
<reference key="3">
    <citation type="journal article" date="2000" name="Proteins">
        <title>Homologs of the alpha- and beta-subunits of mammalian brain platelet-activating factor acetylhydrolase Ib in the Drosophila melanogaster genome.</title>
        <authorList>
            <person name="Sheffield P.J."/>
            <person name="Garrard S."/>
            <person name="Caspi M."/>
            <person name="Aoki J."/>
            <person name="Arai H."/>
            <person name="Derewenda U."/>
            <person name="Inoue K."/>
            <person name="Suter B."/>
            <person name="Reiner O."/>
            <person name="Derewenda Z.S."/>
        </authorList>
    </citation>
    <scope>NUCLEOTIDE SEQUENCE [MRNA]</scope>
    <scope>LACK OF INTERACTION WITH PAF-AH-ALPHA</scope>
</reference>
<reference key="4">
    <citation type="journal article" date="2000" name="Science">
        <title>The genome sequence of Drosophila melanogaster.</title>
        <authorList>
            <person name="Adams M.D."/>
            <person name="Celniker S.E."/>
            <person name="Holt R.A."/>
            <person name="Evans C.A."/>
            <person name="Gocayne J.D."/>
            <person name="Amanatides P.G."/>
            <person name="Scherer S.E."/>
            <person name="Li P.W."/>
            <person name="Hoskins R.A."/>
            <person name="Galle R.F."/>
            <person name="George R.A."/>
            <person name="Lewis S.E."/>
            <person name="Richards S."/>
            <person name="Ashburner M."/>
            <person name="Henderson S.N."/>
            <person name="Sutton G.G."/>
            <person name="Wortman J.R."/>
            <person name="Yandell M.D."/>
            <person name="Zhang Q."/>
            <person name="Chen L.X."/>
            <person name="Brandon R.C."/>
            <person name="Rogers Y.-H.C."/>
            <person name="Blazej R.G."/>
            <person name="Champe M."/>
            <person name="Pfeiffer B.D."/>
            <person name="Wan K.H."/>
            <person name="Doyle C."/>
            <person name="Baxter E.G."/>
            <person name="Helt G."/>
            <person name="Nelson C.R."/>
            <person name="Miklos G.L.G."/>
            <person name="Abril J.F."/>
            <person name="Agbayani A."/>
            <person name="An H.-J."/>
            <person name="Andrews-Pfannkoch C."/>
            <person name="Baldwin D."/>
            <person name="Ballew R.M."/>
            <person name="Basu A."/>
            <person name="Baxendale J."/>
            <person name="Bayraktaroglu L."/>
            <person name="Beasley E.M."/>
            <person name="Beeson K.Y."/>
            <person name="Benos P.V."/>
            <person name="Berman B.P."/>
            <person name="Bhandari D."/>
            <person name="Bolshakov S."/>
            <person name="Borkova D."/>
            <person name="Botchan M.R."/>
            <person name="Bouck J."/>
            <person name="Brokstein P."/>
            <person name="Brottier P."/>
            <person name="Burtis K.C."/>
            <person name="Busam D.A."/>
            <person name="Butler H."/>
            <person name="Cadieu E."/>
            <person name="Center A."/>
            <person name="Chandra I."/>
            <person name="Cherry J.M."/>
            <person name="Cawley S."/>
            <person name="Dahlke C."/>
            <person name="Davenport L.B."/>
            <person name="Davies P."/>
            <person name="de Pablos B."/>
            <person name="Delcher A."/>
            <person name="Deng Z."/>
            <person name="Mays A.D."/>
            <person name="Dew I."/>
            <person name="Dietz S.M."/>
            <person name="Dodson K."/>
            <person name="Doup L.E."/>
            <person name="Downes M."/>
            <person name="Dugan-Rocha S."/>
            <person name="Dunkov B.C."/>
            <person name="Dunn P."/>
            <person name="Durbin K.J."/>
            <person name="Evangelista C.C."/>
            <person name="Ferraz C."/>
            <person name="Ferriera S."/>
            <person name="Fleischmann W."/>
            <person name="Fosler C."/>
            <person name="Gabrielian A.E."/>
            <person name="Garg N.S."/>
            <person name="Gelbart W.M."/>
            <person name="Glasser K."/>
            <person name="Glodek A."/>
            <person name="Gong F."/>
            <person name="Gorrell J.H."/>
            <person name="Gu Z."/>
            <person name="Guan P."/>
            <person name="Harris M."/>
            <person name="Harris N.L."/>
            <person name="Harvey D.A."/>
            <person name="Heiman T.J."/>
            <person name="Hernandez J.R."/>
            <person name="Houck J."/>
            <person name="Hostin D."/>
            <person name="Houston K.A."/>
            <person name="Howland T.J."/>
            <person name="Wei M.-H."/>
            <person name="Ibegwam C."/>
            <person name="Jalali M."/>
            <person name="Kalush F."/>
            <person name="Karpen G.H."/>
            <person name="Ke Z."/>
            <person name="Kennison J.A."/>
            <person name="Ketchum K.A."/>
            <person name="Kimmel B.E."/>
            <person name="Kodira C.D."/>
            <person name="Kraft C.L."/>
            <person name="Kravitz S."/>
            <person name="Kulp D."/>
            <person name="Lai Z."/>
            <person name="Lasko P."/>
            <person name="Lei Y."/>
            <person name="Levitsky A.A."/>
            <person name="Li J.H."/>
            <person name="Li Z."/>
            <person name="Liang Y."/>
            <person name="Lin X."/>
            <person name="Liu X."/>
            <person name="Mattei B."/>
            <person name="McIntosh T.C."/>
            <person name="McLeod M.P."/>
            <person name="McPherson D."/>
            <person name="Merkulov G."/>
            <person name="Milshina N.V."/>
            <person name="Mobarry C."/>
            <person name="Morris J."/>
            <person name="Moshrefi A."/>
            <person name="Mount S.M."/>
            <person name="Moy M."/>
            <person name="Murphy B."/>
            <person name="Murphy L."/>
            <person name="Muzny D.M."/>
            <person name="Nelson D.L."/>
            <person name="Nelson D.R."/>
            <person name="Nelson K.A."/>
            <person name="Nixon K."/>
            <person name="Nusskern D.R."/>
            <person name="Pacleb J.M."/>
            <person name="Palazzolo M."/>
            <person name="Pittman G.S."/>
            <person name="Pan S."/>
            <person name="Pollard J."/>
            <person name="Puri V."/>
            <person name="Reese M.G."/>
            <person name="Reinert K."/>
            <person name="Remington K."/>
            <person name="Saunders R.D.C."/>
            <person name="Scheeler F."/>
            <person name="Shen H."/>
            <person name="Shue B.C."/>
            <person name="Siden-Kiamos I."/>
            <person name="Simpson M."/>
            <person name="Skupski M.P."/>
            <person name="Smith T.J."/>
            <person name="Spier E."/>
            <person name="Spradling A.C."/>
            <person name="Stapleton M."/>
            <person name="Strong R."/>
            <person name="Sun E."/>
            <person name="Svirskas R."/>
            <person name="Tector C."/>
            <person name="Turner R."/>
            <person name="Venter E."/>
            <person name="Wang A.H."/>
            <person name="Wang X."/>
            <person name="Wang Z.-Y."/>
            <person name="Wassarman D.A."/>
            <person name="Weinstock G.M."/>
            <person name="Weissenbach J."/>
            <person name="Williams S.M."/>
            <person name="Woodage T."/>
            <person name="Worley K.C."/>
            <person name="Wu D."/>
            <person name="Yang S."/>
            <person name="Yao Q.A."/>
            <person name="Ye J."/>
            <person name="Yeh R.-F."/>
            <person name="Zaveri J.S."/>
            <person name="Zhan M."/>
            <person name="Zhang G."/>
            <person name="Zhao Q."/>
            <person name="Zheng L."/>
            <person name="Zheng X.H."/>
            <person name="Zhong F.N."/>
            <person name="Zhong W."/>
            <person name="Zhou X."/>
            <person name="Zhu S.C."/>
            <person name="Zhu X."/>
            <person name="Smith H.O."/>
            <person name="Gibbs R.A."/>
            <person name="Myers E.W."/>
            <person name="Rubin G.M."/>
            <person name="Venter J.C."/>
        </authorList>
    </citation>
    <scope>NUCLEOTIDE SEQUENCE [LARGE SCALE GENOMIC DNA]</scope>
    <source>
        <strain>Berkeley</strain>
    </source>
</reference>
<reference key="5">
    <citation type="journal article" date="2002" name="Genome Biol.">
        <title>Annotation of the Drosophila melanogaster euchromatic genome: a systematic review.</title>
        <authorList>
            <person name="Misra S."/>
            <person name="Crosby M.A."/>
            <person name="Mungall C.J."/>
            <person name="Matthews B.B."/>
            <person name="Campbell K.S."/>
            <person name="Hradecky P."/>
            <person name="Huang Y."/>
            <person name="Kaminker J.S."/>
            <person name="Millburn G.H."/>
            <person name="Prochnik S.E."/>
            <person name="Smith C.D."/>
            <person name="Tupy J.L."/>
            <person name="Whitfield E.J."/>
            <person name="Bayraktaroglu L."/>
            <person name="Berman B.P."/>
            <person name="Bettencourt B.R."/>
            <person name="Celniker S.E."/>
            <person name="de Grey A.D.N.J."/>
            <person name="Drysdale R.A."/>
            <person name="Harris N.L."/>
            <person name="Richter J."/>
            <person name="Russo S."/>
            <person name="Schroeder A.J."/>
            <person name="Shu S.Q."/>
            <person name="Stapleton M."/>
            <person name="Yamada C."/>
            <person name="Ashburner M."/>
            <person name="Gelbart W.M."/>
            <person name="Rubin G.M."/>
            <person name="Lewis S.E."/>
        </authorList>
    </citation>
    <scope>GENOME REANNOTATION</scope>
    <source>
        <strain>Berkeley</strain>
    </source>
</reference>
<reference key="6">
    <citation type="journal article" date="2002" name="Genome Biol.">
        <title>A Drosophila full-length cDNA resource.</title>
        <authorList>
            <person name="Stapleton M."/>
            <person name="Carlson J.W."/>
            <person name="Brokstein P."/>
            <person name="Yu C."/>
            <person name="Champe M."/>
            <person name="George R.A."/>
            <person name="Guarin H."/>
            <person name="Kronmiller B."/>
            <person name="Pacleb J.M."/>
            <person name="Park S."/>
            <person name="Wan K.H."/>
            <person name="Rubin G.M."/>
            <person name="Celniker S.E."/>
        </authorList>
    </citation>
    <scope>NUCLEOTIDE SEQUENCE [LARGE SCALE MRNA]</scope>
    <source>
        <strain>Berkeley</strain>
        <tissue>Embryo</tissue>
    </source>
</reference>
<reference key="7">
    <citation type="submission" date="2005-03" db="EMBL/GenBank/DDBJ databases">
        <authorList>
            <person name="Stapleton M."/>
            <person name="Carlson J.W."/>
            <person name="Chavez C."/>
            <person name="Frise E."/>
            <person name="George R.A."/>
            <person name="Pacleb J.M."/>
            <person name="Park S."/>
            <person name="Wan K.H."/>
            <person name="Yu C."/>
            <person name="Rubin G.M."/>
            <person name="Celniker S.E."/>
        </authorList>
    </citation>
    <scope>NUCLEOTIDE SEQUENCE [LARGE SCALE MRNA]</scope>
    <source>
        <strain>Berkeley</strain>
        <tissue>Embryo</tissue>
    </source>
</reference>
<reference key="8">
    <citation type="journal article" date="2000" name="Dev. Biol.">
        <title>The Drosophila Lissencephaly1 (DLis1) gene is required for nuclear migration.</title>
        <authorList>
            <person name="Lei Y."/>
            <person name="Warrior R."/>
        </authorList>
    </citation>
    <scope>FUNCTION</scope>
    <scope>TISSUE SPECIFICITY</scope>
    <scope>DEVELOPMENTAL STAGE</scope>
    <scope>MUTAGENESIS OF SER-167</scope>
</reference>
<reference key="9">
    <citation type="journal article" date="2000" name="Nat. Cell Biol.">
        <title>Drosophila Lis1 is required for neuroblast proliferation, dendritic elaboration and axonal transport.</title>
        <authorList>
            <person name="Liu Z."/>
            <person name="Steward R."/>
            <person name="Luo L."/>
        </authorList>
    </citation>
    <scope>FUNCTION</scope>
    <scope>TISSUE SPECIFICITY</scope>
</reference>
<reference key="10">
    <citation type="journal article" date="2005" name="J. Cell Sci.">
        <title>Distinct mechanisms govern the localisation of Drosophila CLIP-190 to unattached kinetochores and microtubule plus-ends.</title>
        <authorList>
            <person name="Dzhindzhev N.S."/>
            <person name="Rogers S.L."/>
            <person name="Vale R.D."/>
            <person name="Ohkura H."/>
        </authorList>
    </citation>
    <scope>FUNCTION</scope>
</reference>
<reference key="11">
    <citation type="journal article" date="2005" name="Mol. Biol. Cell">
        <title>Live imaging of Drosophila brain neuroblasts reveals a role for Lis1/dynactin in spindle assembly and mitotic checkpoint control.</title>
        <authorList>
            <person name="Siller K.H."/>
            <person name="Serr M."/>
            <person name="Steward R."/>
            <person name="Hays T.S."/>
            <person name="Doe C.Q."/>
        </authorList>
    </citation>
    <scope>FUNCTION</scope>
    <scope>INTERACTION WITH DYNEIN AND DYNACTIN</scope>
    <scope>SUBCELLULAR LOCATION</scope>
</reference>
<dbReference type="EMBL" id="AF152419">
    <property type="protein sequence ID" value="AAD38390.1"/>
    <property type="molecule type" value="mRNA"/>
</dbReference>
<dbReference type="EMBL" id="AF117606">
    <property type="protein sequence ID" value="AAD13113.1"/>
    <property type="molecule type" value="mRNA"/>
</dbReference>
<dbReference type="EMBL" id="AF098070">
    <property type="protein sequence ID" value="AAC83821.1"/>
    <property type="status" value="ALT_INIT"/>
    <property type="molecule type" value="mRNA"/>
</dbReference>
<dbReference type="EMBL" id="AE013599">
    <property type="protein sequence ID" value="AAO41380.1"/>
    <property type="molecule type" value="Genomic_DNA"/>
</dbReference>
<dbReference type="EMBL" id="AE013599">
    <property type="protein sequence ID" value="AAS64845.1"/>
    <property type="molecule type" value="Genomic_DNA"/>
</dbReference>
<dbReference type="EMBL" id="AE013599">
    <property type="protein sequence ID" value="AAF58050.1"/>
    <property type="molecule type" value="Genomic_DNA"/>
</dbReference>
<dbReference type="EMBL" id="AY089600">
    <property type="protein sequence ID" value="AAL90338.1"/>
    <property type="status" value="ALT_FRAME"/>
    <property type="molecule type" value="mRNA"/>
</dbReference>
<dbReference type="EMBL" id="BT021404">
    <property type="protein sequence ID" value="AAX33552.1"/>
    <property type="molecule type" value="mRNA"/>
</dbReference>
<dbReference type="RefSeq" id="NP_001246361.1">
    <property type="nucleotide sequence ID" value="NM_001259432.2"/>
</dbReference>
<dbReference type="RefSeq" id="NP_477160.1">
    <property type="nucleotide sequence ID" value="NM_057812.5"/>
</dbReference>
<dbReference type="RefSeq" id="NP_788370.1">
    <property type="nucleotide sequence ID" value="NM_176190.2"/>
</dbReference>
<dbReference type="RefSeq" id="NP_995852.1">
    <property type="nucleotide sequence ID" value="NM_206130.2"/>
</dbReference>
<dbReference type="SMR" id="Q7KNS3"/>
<dbReference type="BioGRID" id="62511">
    <property type="interactions" value="26"/>
</dbReference>
<dbReference type="DIP" id="DIP-59474N"/>
<dbReference type="FunCoup" id="Q7KNS3">
    <property type="interactions" value="2043"/>
</dbReference>
<dbReference type="IntAct" id="Q7KNS3">
    <property type="interactions" value="3"/>
</dbReference>
<dbReference type="STRING" id="7227.FBpp0089100"/>
<dbReference type="PaxDb" id="7227-FBpp0086375"/>
<dbReference type="DNASU" id="36791"/>
<dbReference type="EnsemblMetazoa" id="FBtr0087236">
    <property type="protein sequence ID" value="FBpp0086375"/>
    <property type="gene ID" value="FBgn0015754"/>
</dbReference>
<dbReference type="EnsemblMetazoa" id="FBtr0087240">
    <property type="protein sequence ID" value="FBpp0086379"/>
    <property type="gene ID" value="FBgn0015754"/>
</dbReference>
<dbReference type="EnsemblMetazoa" id="FBtr0087241">
    <property type="protein sequence ID" value="FBpp0089100"/>
    <property type="gene ID" value="FBgn0015754"/>
</dbReference>
<dbReference type="EnsemblMetazoa" id="FBtr0304747">
    <property type="protein sequence ID" value="FBpp0293289"/>
    <property type="gene ID" value="FBgn0015754"/>
</dbReference>
<dbReference type="GeneID" id="36791"/>
<dbReference type="KEGG" id="dme:Dmel_CG8440"/>
<dbReference type="UCSC" id="CG8440-RB">
    <property type="organism name" value="d. melanogaster"/>
</dbReference>
<dbReference type="AGR" id="FB:FBgn0015754"/>
<dbReference type="CTD" id="36791"/>
<dbReference type="FlyBase" id="FBgn0015754">
    <property type="gene designation" value="Lis-1"/>
</dbReference>
<dbReference type="VEuPathDB" id="VectorBase:FBgn0015754"/>
<dbReference type="eggNOG" id="KOG0295">
    <property type="taxonomic scope" value="Eukaryota"/>
</dbReference>
<dbReference type="GeneTree" id="ENSGT00940000155039"/>
<dbReference type="HOGENOM" id="CLU_000288_57_15_1"/>
<dbReference type="InParanoid" id="Q7KNS3"/>
<dbReference type="OMA" id="WHVATKE"/>
<dbReference type="OrthoDB" id="674604at2759"/>
<dbReference type="PhylomeDB" id="Q7KNS3"/>
<dbReference type="Reactome" id="R-DME-6811436">
    <property type="pathway name" value="COPI-independent Golgi-to-ER retrograde traffic"/>
</dbReference>
<dbReference type="SignaLink" id="Q7KNS3"/>
<dbReference type="BioGRID-ORCS" id="36791">
    <property type="hits" value="1 hit in 1 CRISPR screen"/>
</dbReference>
<dbReference type="GenomeRNAi" id="36791"/>
<dbReference type="PRO" id="PR:Q7KNS3"/>
<dbReference type="Proteomes" id="UP000000803">
    <property type="component" value="Chromosome 2R"/>
</dbReference>
<dbReference type="Bgee" id="FBgn0015754">
    <property type="expression patterns" value="Expressed in mechanosensory neuron (Drosophila) in insect leg and 300 other cell types or tissues"/>
</dbReference>
<dbReference type="ExpressionAtlas" id="Q7KNS3">
    <property type="expression patterns" value="baseline and differential"/>
</dbReference>
<dbReference type="GO" id="GO:0030424">
    <property type="term" value="C:axon"/>
    <property type="evidence" value="ECO:0000314"/>
    <property type="project" value="UniProtKB"/>
</dbReference>
<dbReference type="GO" id="GO:1904115">
    <property type="term" value="C:axon cytoplasm"/>
    <property type="evidence" value="ECO:0007669"/>
    <property type="project" value="GOC"/>
</dbReference>
<dbReference type="GO" id="GO:0005938">
    <property type="term" value="C:cell cortex"/>
    <property type="evidence" value="ECO:0000314"/>
    <property type="project" value="FlyBase"/>
</dbReference>
<dbReference type="GO" id="GO:0005813">
    <property type="term" value="C:centrosome"/>
    <property type="evidence" value="ECO:0000314"/>
    <property type="project" value="FlyBase"/>
</dbReference>
<dbReference type="GO" id="GO:0005881">
    <property type="term" value="C:cytoplasmic microtubule"/>
    <property type="evidence" value="ECO:0000318"/>
    <property type="project" value="GO_Central"/>
</dbReference>
<dbReference type="GO" id="GO:0030425">
    <property type="term" value="C:dendrite"/>
    <property type="evidence" value="ECO:0000314"/>
    <property type="project" value="UniProtKB"/>
</dbReference>
<dbReference type="GO" id="GO:0005869">
    <property type="term" value="C:dynactin complex"/>
    <property type="evidence" value="ECO:0000314"/>
    <property type="project" value="FlyBase"/>
</dbReference>
<dbReference type="GO" id="GO:0030286">
    <property type="term" value="C:dynein complex"/>
    <property type="evidence" value="ECO:0000314"/>
    <property type="project" value="FlyBase"/>
</dbReference>
<dbReference type="GO" id="GO:0030426">
    <property type="term" value="C:growth cone"/>
    <property type="evidence" value="ECO:0000314"/>
    <property type="project" value="FlyBase"/>
</dbReference>
<dbReference type="GO" id="GO:0000776">
    <property type="term" value="C:kinetochore"/>
    <property type="evidence" value="ECO:0000314"/>
    <property type="project" value="FlyBase"/>
</dbReference>
<dbReference type="GO" id="GO:0005875">
    <property type="term" value="C:microtubule associated complex"/>
    <property type="evidence" value="ECO:0000318"/>
    <property type="project" value="GO_Central"/>
</dbReference>
<dbReference type="GO" id="GO:0043005">
    <property type="term" value="C:neuron projection"/>
    <property type="evidence" value="ECO:0000318"/>
    <property type="project" value="GO_Central"/>
</dbReference>
<dbReference type="GO" id="GO:0043025">
    <property type="term" value="C:neuronal cell body"/>
    <property type="evidence" value="ECO:0000314"/>
    <property type="project" value="UniProtKB"/>
</dbReference>
<dbReference type="GO" id="GO:0005635">
    <property type="term" value="C:nuclear envelope"/>
    <property type="evidence" value="ECO:0000318"/>
    <property type="project" value="GO_Central"/>
</dbReference>
<dbReference type="GO" id="GO:0000922">
    <property type="term" value="C:spindle pole"/>
    <property type="evidence" value="ECO:0000314"/>
    <property type="project" value="FlyBase"/>
</dbReference>
<dbReference type="GO" id="GO:0070840">
    <property type="term" value="F:dynein complex binding"/>
    <property type="evidence" value="ECO:0000353"/>
    <property type="project" value="FlyBase"/>
</dbReference>
<dbReference type="GO" id="GO:0051010">
    <property type="term" value="F:microtubule plus-end binding"/>
    <property type="evidence" value="ECO:0000318"/>
    <property type="project" value="GO_Central"/>
</dbReference>
<dbReference type="GO" id="GO:0008088">
    <property type="term" value="P:axo-dendritic transport"/>
    <property type="evidence" value="ECO:0000315"/>
    <property type="project" value="FlyBase"/>
</dbReference>
<dbReference type="GO" id="GO:0098930">
    <property type="term" value="P:axonal transport"/>
    <property type="evidence" value="ECO:0000315"/>
    <property type="project" value="UniProtKB"/>
</dbReference>
<dbReference type="GO" id="GO:0007298">
    <property type="term" value="P:border follicle cell migration"/>
    <property type="evidence" value="ECO:0000315"/>
    <property type="project" value="FlyBase"/>
</dbReference>
<dbReference type="GO" id="GO:0048854">
    <property type="term" value="P:brain morphogenesis"/>
    <property type="evidence" value="ECO:0000318"/>
    <property type="project" value="GO_Central"/>
</dbReference>
<dbReference type="GO" id="GO:0051642">
    <property type="term" value="P:centrosome localization"/>
    <property type="evidence" value="ECO:0000315"/>
    <property type="project" value="FlyBase"/>
</dbReference>
<dbReference type="GO" id="GO:0051299">
    <property type="term" value="P:centrosome separation"/>
    <property type="evidence" value="ECO:0000315"/>
    <property type="project" value="FlyBase"/>
</dbReference>
<dbReference type="GO" id="GO:0030381">
    <property type="term" value="P:chorion-containing eggshell pattern formation"/>
    <property type="evidence" value="ECO:0000315"/>
    <property type="project" value="FlyBase"/>
</dbReference>
<dbReference type="GO" id="GO:0061883">
    <property type="term" value="P:clathrin-dependent endocytosis involved in vitellogenesis"/>
    <property type="evidence" value="ECO:0000314"/>
    <property type="project" value="FlyBase"/>
</dbReference>
<dbReference type="GO" id="GO:0016358">
    <property type="term" value="P:dendrite development"/>
    <property type="evidence" value="ECO:0000315"/>
    <property type="project" value="UniProtKB"/>
</dbReference>
<dbReference type="GO" id="GO:0048813">
    <property type="term" value="P:dendrite morphogenesis"/>
    <property type="evidence" value="ECO:0000315"/>
    <property type="project" value="FlyBase"/>
</dbReference>
<dbReference type="GO" id="GO:0000132">
    <property type="term" value="P:establishment of mitotic spindle orientation"/>
    <property type="evidence" value="ECO:0000318"/>
    <property type="project" value="GO_Central"/>
</dbReference>
<dbReference type="GO" id="GO:0048135">
    <property type="term" value="P:female germ-line cyst formation"/>
    <property type="evidence" value="ECO:0000315"/>
    <property type="project" value="FlyBase"/>
</dbReference>
<dbReference type="GO" id="GO:0045478">
    <property type="term" value="P:fusome organization"/>
    <property type="evidence" value="ECO:0000315"/>
    <property type="project" value="FlyBase"/>
</dbReference>
<dbReference type="GO" id="GO:0007281">
    <property type="term" value="P:germ cell development"/>
    <property type="evidence" value="ECO:0000318"/>
    <property type="project" value="GO_Central"/>
</dbReference>
<dbReference type="GO" id="GO:0048142">
    <property type="term" value="P:germarium-derived cystoblast division"/>
    <property type="evidence" value="ECO:0000315"/>
    <property type="project" value="UniProtKB"/>
</dbReference>
<dbReference type="GO" id="GO:0030706">
    <property type="term" value="P:germarium-derived oocyte differentiation"/>
    <property type="evidence" value="ECO:0000315"/>
    <property type="project" value="UniProtKB"/>
</dbReference>
<dbReference type="GO" id="GO:0007294">
    <property type="term" value="P:germarium-derived oocyte fate determination"/>
    <property type="evidence" value="ECO:0000315"/>
    <property type="project" value="UniProtKB"/>
</dbReference>
<dbReference type="GO" id="GO:0008298">
    <property type="term" value="P:intracellular mRNA localization"/>
    <property type="evidence" value="ECO:0000315"/>
    <property type="project" value="FlyBase"/>
</dbReference>
<dbReference type="GO" id="GO:0006886">
    <property type="term" value="P:intracellular protein transport"/>
    <property type="evidence" value="ECO:0000315"/>
    <property type="project" value="FlyBase"/>
</dbReference>
<dbReference type="GO" id="GO:0051383">
    <property type="term" value="P:kinetochore organization"/>
    <property type="evidence" value="ECO:0000315"/>
    <property type="project" value="FlyBase"/>
</dbReference>
<dbReference type="GO" id="GO:0031023">
    <property type="term" value="P:microtubule organizing center organization"/>
    <property type="evidence" value="ECO:0000318"/>
    <property type="project" value="GO_Central"/>
</dbReference>
<dbReference type="GO" id="GO:0051012">
    <property type="term" value="P:microtubule sliding"/>
    <property type="evidence" value="ECO:0007669"/>
    <property type="project" value="UniProtKB-UniRule"/>
</dbReference>
<dbReference type="GO" id="GO:0046716">
    <property type="term" value="P:muscle cell cellular homeostasis"/>
    <property type="evidence" value="ECO:0000315"/>
    <property type="project" value="FlyBase"/>
</dbReference>
<dbReference type="GO" id="GO:0016319">
    <property type="term" value="P:mushroom body development"/>
    <property type="evidence" value="ECO:0000315"/>
    <property type="project" value="UniProtKB"/>
</dbReference>
<dbReference type="GO" id="GO:0007405">
    <property type="term" value="P:neuroblast proliferation"/>
    <property type="evidence" value="ECO:0000315"/>
    <property type="project" value="UniProtKB"/>
</dbReference>
<dbReference type="GO" id="GO:0007097">
    <property type="term" value="P:nuclear migration"/>
    <property type="evidence" value="ECO:0000315"/>
    <property type="project" value="UniProtKB"/>
</dbReference>
<dbReference type="GO" id="GO:0030473">
    <property type="term" value="P:nuclear migration along microtubule"/>
    <property type="evidence" value="ECO:0000316"/>
    <property type="project" value="FlyBase"/>
</dbReference>
<dbReference type="GO" id="GO:0051647">
    <property type="term" value="P:nucleus localization"/>
    <property type="evidence" value="ECO:0000315"/>
    <property type="project" value="FlyBase"/>
</dbReference>
<dbReference type="GO" id="GO:0030716">
    <property type="term" value="P:oocyte fate determination"/>
    <property type="evidence" value="ECO:0000316"/>
    <property type="project" value="FlyBase"/>
</dbReference>
<dbReference type="GO" id="GO:0007312">
    <property type="term" value="P:oocyte nucleus migration involved in oocyte dorsal/ventral axis specification"/>
    <property type="evidence" value="ECO:0000315"/>
    <property type="project" value="FlyBase"/>
</dbReference>
<dbReference type="GO" id="GO:0048477">
    <property type="term" value="P:oogenesis"/>
    <property type="evidence" value="ECO:0000315"/>
    <property type="project" value="FlyBase"/>
</dbReference>
<dbReference type="GO" id="GO:0030723">
    <property type="term" value="P:ovarian fusome organization"/>
    <property type="evidence" value="ECO:0000315"/>
    <property type="project" value="UniProtKB"/>
</dbReference>
<dbReference type="GO" id="GO:0007300">
    <property type="term" value="P:ovarian nurse cell to oocyte transport"/>
    <property type="evidence" value="ECO:0000315"/>
    <property type="project" value="FlyBase"/>
</dbReference>
<dbReference type="GO" id="GO:0072499">
    <property type="term" value="P:photoreceptor cell axon guidance"/>
    <property type="evidence" value="ECO:0000315"/>
    <property type="project" value="FlyBase"/>
</dbReference>
<dbReference type="GO" id="GO:0050772">
    <property type="term" value="P:positive regulation of axonogenesis"/>
    <property type="evidence" value="ECO:0000315"/>
    <property type="project" value="FlyBase"/>
</dbReference>
<dbReference type="GO" id="GO:0030513">
    <property type="term" value="P:positive regulation of BMP signaling pathway"/>
    <property type="evidence" value="ECO:0000314"/>
    <property type="project" value="FlyBase"/>
</dbReference>
<dbReference type="GO" id="GO:0045842">
    <property type="term" value="P:positive regulation of mitotic metaphase/anaphase transition"/>
    <property type="evidence" value="ECO:0000315"/>
    <property type="project" value="FlyBase"/>
</dbReference>
<dbReference type="GO" id="GO:0008104">
    <property type="term" value="P:protein localization"/>
    <property type="evidence" value="ECO:0000315"/>
    <property type="project" value="UniProtKB"/>
</dbReference>
<dbReference type="GO" id="GO:0034501">
    <property type="term" value="P:protein localization to kinetochore"/>
    <property type="evidence" value="ECO:0000315"/>
    <property type="project" value="FlyBase"/>
</dbReference>
<dbReference type="GO" id="GO:0048814">
    <property type="term" value="P:regulation of dendrite morphogenesis"/>
    <property type="evidence" value="ECO:0000315"/>
    <property type="project" value="FlyBase"/>
</dbReference>
<dbReference type="GO" id="GO:0008090">
    <property type="term" value="P:retrograde axonal transport"/>
    <property type="evidence" value="ECO:0000315"/>
    <property type="project" value="FlyBase"/>
</dbReference>
<dbReference type="GO" id="GO:0042052">
    <property type="term" value="P:rhabdomere development"/>
    <property type="evidence" value="ECO:0000315"/>
    <property type="project" value="FlyBase"/>
</dbReference>
<dbReference type="GO" id="GO:0007283">
    <property type="term" value="P:spermatogenesis"/>
    <property type="evidence" value="ECO:0000315"/>
    <property type="project" value="FlyBase"/>
</dbReference>
<dbReference type="GO" id="GO:0051225">
    <property type="term" value="P:spindle assembly"/>
    <property type="evidence" value="ECO:0000315"/>
    <property type="project" value="FlyBase"/>
</dbReference>
<dbReference type="GO" id="GO:0019827">
    <property type="term" value="P:stem cell population maintenance"/>
    <property type="evidence" value="ECO:0000314"/>
    <property type="project" value="FlyBase"/>
</dbReference>
<dbReference type="GO" id="GO:0010970">
    <property type="term" value="P:transport along microtubule"/>
    <property type="evidence" value="ECO:0000315"/>
    <property type="project" value="FlyBase"/>
</dbReference>
<dbReference type="GO" id="GO:0047496">
    <property type="term" value="P:vesicle transport along microtubule"/>
    <property type="evidence" value="ECO:0000318"/>
    <property type="project" value="GO_Central"/>
</dbReference>
<dbReference type="CDD" id="cd00200">
    <property type="entry name" value="WD40"/>
    <property type="match status" value="1"/>
</dbReference>
<dbReference type="FunFam" id="2.130.10.10:FF:000038">
    <property type="entry name" value="Lissencephaly-1 homolog B"/>
    <property type="match status" value="1"/>
</dbReference>
<dbReference type="FunFam" id="1.20.960.30:FF:000002">
    <property type="entry name" value="Platelet-activating factor acetylhydrolase ib"/>
    <property type="match status" value="1"/>
</dbReference>
<dbReference type="Gene3D" id="1.20.960.30">
    <property type="match status" value="1"/>
</dbReference>
<dbReference type="Gene3D" id="2.130.10.10">
    <property type="entry name" value="YVTN repeat-like/Quinoprotein amine dehydrogenase"/>
    <property type="match status" value="1"/>
</dbReference>
<dbReference type="HAMAP" id="MF_03141">
    <property type="entry name" value="lis1"/>
    <property type="match status" value="1"/>
</dbReference>
<dbReference type="InterPro" id="IPR017252">
    <property type="entry name" value="Dynein_regulator_LIS1"/>
</dbReference>
<dbReference type="InterPro" id="IPR020472">
    <property type="entry name" value="G-protein_beta_WD-40_rep"/>
</dbReference>
<dbReference type="InterPro" id="IPR037190">
    <property type="entry name" value="LIS1_N"/>
</dbReference>
<dbReference type="InterPro" id="IPR006594">
    <property type="entry name" value="LisH"/>
</dbReference>
<dbReference type="InterPro" id="IPR056795">
    <property type="entry name" value="PAC1-like_LisH-like_dom"/>
</dbReference>
<dbReference type="InterPro" id="IPR015943">
    <property type="entry name" value="WD40/YVTN_repeat-like_dom_sf"/>
</dbReference>
<dbReference type="InterPro" id="IPR019775">
    <property type="entry name" value="WD40_repeat_CS"/>
</dbReference>
<dbReference type="InterPro" id="IPR036322">
    <property type="entry name" value="WD40_repeat_dom_sf"/>
</dbReference>
<dbReference type="InterPro" id="IPR001680">
    <property type="entry name" value="WD40_rpt"/>
</dbReference>
<dbReference type="InterPro" id="IPR050349">
    <property type="entry name" value="WD_LIS1/nudF_dynein_reg"/>
</dbReference>
<dbReference type="PANTHER" id="PTHR44129">
    <property type="entry name" value="WD REPEAT-CONTAINING PROTEIN POP1"/>
    <property type="match status" value="1"/>
</dbReference>
<dbReference type="Pfam" id="PF24951">
    <property type="entry name" value="LisH_PAC1"/>
    <property type="match status" value="1"/>
</dbReference>
<dbReference type="Pfam" id="PF00400">
    <property type="entry name" value="WD40"/>
    <property type="match status" value="7"/>
</dbReference>
<dbReference type="PIRSF" id="PIRSF037647">
    <property type="entry name" value="Dynein_regulator_Lis1"/>
    <property type="match status" value="1"/>
</dbReference>
<dbReference type="PRINTS" id="PR00320">
    <property type="entry name" value="GPROTEINBRPT"/>
</dbReference>
<dbReference type="SMART" id="SM00667">
    <property type="entry name" value="LisH"/>
    <property type="match status" value="1"/>
</dbReference>
<dbReference type="SMART" id="SM00320">
    <property type="entry name" value="WD40"/>
    <property type="match status" value="7"/>
</dbReference>
<dbReference type="SUPFAM" id="SSF109925">
    <property type="entry name" value="Lissencephaly-1 protein (Lis-1, PAF-AH alpha) N-terminal domain"/>
    <property type="match status" value="1"/>
</dbReference>
<dbReference type="SUPFAM" id="SSF50978">
    <property type="entry name" value="WD40 repeat-like"/>
    <property type="match status" value="1"/>
</dbReference>
<dbReference type="PROSITE" id="PS50896">
    <property type="entry name" value="LISH"/>
    <property type="match status" value="1"/>
</dbReference>
<dbReference type="PROSITE" id="PS00678">
    <property type="entry name" value="WD_REPEATS_1"/>
    <property type="match status" value="6"/>
</dbReference>
<dbReference type="PROSITE" id="PS50082">
    <property type="entry name" value="WD_REPEATS_2"/>
    <property type="match status" value="7"/>
</dbReference>
<dbReference type="PROSITE" id="PS50294">
    <property type="entry name" value="WD_REPEATS_REGION"/>
    <property type="match status" value="1"/>
</dbReference>
<comment type="function">
    <text evidence="1 2 3 4 5 6 7">Positively regulates the activity of the minus-end directed microtubule motor protein dynein. May enhance dynein-mediated microtubule sliding by targeting dynein to the microtubule plus end. Required for several dynein- and microtubule-dependent processes such as nuclear migration during cell division, mitotic spindle formation and the removal of mitotic checkpoint proteins from kinetochores at the metaphase to anaphase transition. Required for several aspects of neurogenesis including neuroblast proliferation, neuronal cell differentiation, dendritic growth, branching and maturation and axonal transport. Required for synchronized cell divisions in the germline, fusome integrity and oocyte differentiation. Acts together with BicD, Egl, dynein and microtubules to determine oocyte identity during oogenesis. Also required for nurse cell to oocyte transport during oocyte growth and for the positioning of the nucleus in the oocyte.</text>
</comment>
<comment type="subunit">
    <text evidence="7">Interacts with dynein and dynactin. Does not interact with Paf-A-Halpha.</text>
</comment>
<comment type="interaction">
    <interactant intactId="EBI-156005">
        <id>Q7KNS3</id>
    </interactant>
    <interactant intactId="EBI-162238">
        <id>P42003</id>
        <label>Mad</label>
    </interactant>
    <organismsDiffer>false</organismsDiffer>
    <experiments>2</experiments>
</comment>
<comment type="subcellular location">
    <subcellularLocation>
        <location>Cytoplasm</location>
        <location>Cytoskeleton</location>
    </subcellularLocation>
    <subcellularLocation>
        <location evidence="1">Cytoplasm</location>
        <location evidence="1">Cytoskeleton</location>
        <location evidence="1">Microtubule organizing center</location>
        <location evidence="1">Centrosome</location>
    </subcellularLocation>
    <subcellularLocation>
        <location>Cytoplasm</location>
        <location>Cytoskeleton</location>
        <location>Spindle pole</location>
    </subcellularLocation>
    <subcellularLocation>
        <location>Chromosome</location>
        <location>Centromere</location>
        <location>Kinetochore</location>
    </subcellularLocation>
    <text>Localizes to the plus end of microtubules. Also localizes to the mitotic spindle poles from late prophase through to telophase and to kinetochore microtubules in metaphase. Localization to kinetochore microtubules is reduced in anaphase and telophase. In oocytes, it concentrates in the cortex from stage 5 of oogenesis.</text>
</comment>
<comment type="tissue specificity">
    <text evidence="2 4 5">Expressed primarily in germline cells during oogenesis. Low levels are detected in the germarium in regions 1 and 2 and in both nurse cells and the oocyte in stage 2-4 egg chambers. Enriched in the oocyte during stages 5-7 and in nurse cells in stage 8-10 egg chambers. Ubiquitously distributed in early embryos. Expressed throughout cell bodies, dendrites and axons of the mushroom-body neurons.</text>
</comment>
<comment type="developmental stage">
    <text evidence="4">Expressed both maternally and zygotically. Expressed throughout all developmental stages but is most abundant at precellular blastoderm stages; expression declines after gastrulation. Expressed at higher level in adult females. Following germ-band retraction it is enriched in the developing central nervous system. In third-instar larvae, low levels are detected in the brain hemispheres and imaginal disks.</text>
</comment>
<comment type="domain">
    <text evidence="1">Dimerization mediated by the LisH domain may be required to activate dynein.</text>
</comment>
<comment type="similarity">
    <text evidence="1">Belongs to the WD repeat LIS1/nudF family.</text>
</comment>
<comment type="sequence caution" evidence="8">
    <conflict type="erroneous initiation">
        <sequence resource="EMBL-CDS" id="AAC83821"/>
    </conflict>
    <text>Truncated N-terminus.</text>
</comment>
<comment type="sequence caution" evidence="8">
    <conflict type="frameshift">
        <sequence resource="EMBL-CDS" id="AAL90338"/>
    </conflict>
</comment>
<gene>
    <name evidence="1" type="primary">Lis-1</name>
    <name type="synonym">Lis1</name>
    <name type="ORF">CG8440</name>
</gene>
<feature type="chain" id="PRO_0000051067" description="Lissencephaly-1 homolog">
    <location>
        <begin position="1"/>
        <end position="411"/>
    </location>
</feature>
<feature type="domain" description="LisH" evidence="1">
    <location>
        <begin position="9"/>
        <end position="41"/>
    </location>
</feature>
<feature type="repeat" description="WD 1">
    <location>
        <begin position="106"/>
        <end position="147"/>
    </location>
</feature>
<feature type="repeat" description="WD 2">
    <location>
        <begin position="148"/>
        <end position="187"/>
    </location>
</feature>
<feature type="repeat" description="WD 3">
    <location>
        <begin position="191"/>
        <end position="230"/>
    </location>
</feature>
<feature type="repeat" description="WD 4">
    <location>
        <begin position="233"/>
        <end position="272"/>
    </location>
</feature>
<feature type="repeat" description="WD 5">
    <location>
        <begin position="275"/>
        <end position="334"/>
    </location>
</feature>
<feature type="repeat" description="WD 6">
    <location>
        <begin position="337"/>
        <end position="376"/>
    </location>
</feature>
<feature type="repeat" description="WD 7">
    <location>
        <begin position="379"/>
        <end position="411"/>
    </location>
</feature>
<feature type="coiled-coil region" evidence="1">
    <location>
        <begin position="56"/>
        <end position="83"/>
    </location>
</feature>
<feature type="mutagenesis site" description="In Lis1-23F2; induces lethality in second instar larvae." evidence="2">
    <original>E</original>
    <variation>K</variation>
    <location>
        <position position="128"/>
    </location>
</feature>
<feature type="mutagenesis site" description="In DLis8.25.3; induces defects in nuclear migration." evidence="4">
    <original>S</original>
    <variation>F</variation>
    <location>
        <position position="167"/>
    </location>
</feature>
<feature type="sequence conflict" description="In Ref. 3; AAC83821." evidence="8" ref="3">
    <original>K</original>
    <variation>T</variation>
    <location>
        <position position="2"/>
    </location>
</feature>